<organism>
    <name type="scientific">Homo sapiens</name>
    <name type="common">Human</name>
    <dbReference type="NCBI Taxonomy" id="9606"/>
    <lineage>
        <taxon>Eukaryota</taxon>
        <taxon>Metazoa</taxon>
        <taxon>Chordata</taxon>
        <taxon>Craniata</taxon>
        <taxon>Vertebrata</taxon>
        <taxon>Euteleostomi</taxon>
        <taxon>Mammalia</taxon>
        <taxon>Eutheria</taxon>
        <taxon>Euarchontoglires</taxon>
        <taxon>Primates</taxon>
        <taxon>Haplorrhini</taxon>
        <taxon>Catarrhini</taxon>
        <taxon>Hominidae</taxon>
        <taxon>Homo</taxon>
    </lineage>
</organism>
<sequence length="555" mass="62034">MERPAPGEVVMSQAIQPAHATARGELSAGQLLKWIDTTACLAAEKHAGVSCVTASVDDIQFEETARVGQVITIKAKVTRAFSTSMEISIKVMVQDMLTGIEKLVSVAFSTFVAKPVGKEKIHLKPVTLLTEQDHVEHNLAAERRKVRLQHEDTFNNLMKESSKFDDLIFDEEEGAVSTRGTSVQSIELVLPPHANHHGNTFGGQIMAWMETVATISASRLCWAHPFLKSVDMFKFRGPSTVGDRLVFTAIVNNTFQTCVEVGVRVEAFDCQEWAEGRGRHINSAFLIYNAADDKENLITFPRIQPISKDDFRRYRGAIARKRIRLGRKYVISHKEEVPLCIHWDISKQASLSDSNVEALKKLAAKRGWEVTSTVEKIKIYTLEEHDVLSVWVEKHVGSPAHLAYRLLSDFTKRPLWDPHFVSCEVIDWVSEDDQLYHITCPILNDDKPKDLVVLVSRRKPLKDGNTYTVAVKSVILPSVPPSPQYIRSEIICAGFLIHAIDSNSCIVSYFNHMSASILPYFAGNLGGWSKSIEETAASCIQFLENPPDDGFVSTF</sequence>
<protein>
    <recommendedName>
        <fullName evidence="9">Acetyl-coenzyme A thioesterase</fullName>
        <ecNumber evidence="5">3.1.2.1</ecNumber>
    </recommendedName>
    <alternativeName>
        <fullName>Acyl-CoA thioester hydrolase 12</fullName>
    </alternativeName>
    <alternativeName>
        <fullName>Acyl-coenzyme A thioesterase 12</fullName>
        <shortName>Acyl-CoA thioesterase 12</shortName>
    </alternativeName>
    <alternativeName>
        <fullName>Cytoplasmic acetyl-CoA hydrolase 1</fullName>
        <shortName>CACH-1</shortName>
        <shortName>hCACH-1</shortName>
    </alternativeName>
    <alternativeName>
        <fullName>START domain-containing protein 15</fullName>
        <shortName>StARD15</shortName>
    </alternativeName>
</protein>
<name>ACO12_HUMAN</name>
<proteinExistence type="evidence at protein level"/>
<dbReference type="EC" id="3.1.2.1" evidence="5"/>
<dbReference type="EMBL" id="AB078619">
    <property type="protein sequence ID" value="BAB84022.1"/>
    <property type="molecule type" value="mRNA"/>
</dbReference>
<dbReference type="EMBL" id="AK122960">
    <property type="protein sequence ID" value="BAG53821.1"/>
    <property type="molecule type" value="mRNA"/>
</dbReference>
<dbReference type="EMBL" id="AC008411">
    <property type="status" value="NOT_ANNOTATED_CDS"/>
    <property type="molecule type" value="Genomic_DNA"/>
</dbReference>
<dbReference type="EMBL" id="AC010623">
    <property type="status" value="NOT_ANNOTATED_CDS"/>
    <property type="molecule type" value="Genomic_DNA"/>
</dbReference>
<dbReference type="EMBL" id="CH471084">
    <property type="protein sequence ID" value="EAW95875.1"/>
    <property type="molecule type" value="Genomic_DNA"/>
</dbReference>
<dbReference type="EMBL" id="BC089437">
    <property type="protein sequence ID" value="AAH89437.1"/>
    <property type="molecule type" value="mRNA"/>
</dbReference>
<dbReference type="EMBL" id="BC075010">
    <property type="protein sequence ID" value="AAH75010.1"/>
    <property type="molecule type" value="mRNA"/>
</dbReference>
<dbReference type="EMBL" id="BC075011">
    <property type="protein sequence ID" value="AAH75011.1"/>
    <property type="molecule type" value="mRNA"/>
</dbReference>
<dbReference type="CCDS" id="CCDS4055.1">
    <molecule id="Q8WYK0-1"/>
</dbReference>
<dbReference type="RefSeq" id="NP_570123.1">
    <molecule id="Q8WYK0-1"/>
    <property type="nucleotide sequence ID" value="NM_130767.3"/>
</dbReference>
<dbReference type="PDB" id="3B7K">
    <property type="method" value="X-ray"/>
    <property type="resolution" value="2.70 A"/>
    <property type="chains" value="A/B/C=7-316"/>
</dbReference>
<dbReference type="PDB" id="4MOB">
    <property type="method" value="X-ray"/>
    <property type="resolution" value="2.40 A"/>
    <property type="chains" value="A=7-336"/>
</dbReference>
<dbReference type="PDB" id="4MOC">
    <property type="method" value="X-ray"/>
    <property type="resolution" value="2.50 A"/>
    <property type="chains" value="A=7-336"/>
</dbReference>
<dbReference type="PDBsum" id="3B7K"/>
<dbReference type="PDBsum" id="4MOB"/>
<dbReference type="PDBsum" id="4MOC"/>
<dbReference type="SMR" id="Q8WYK0"/>
<dbReference type="BioGRID" id="126405">
    <property type="interactions" value="15"/>
</dbReference>
<dbReference type="FunCoup" id="Q8WYK0">
    <property type="interactions" value="125"/>
</dbReference>
<dbReference type="IntAct" id="Q8WYK0">
    <property type="interactions" value="14"/>
</dbReference>
<dbReference type="STRING" id="9606.ENSP00000303246"/>
<dbReference type="SwissLipids" id="SLP:000001187"/>
<dbReference type="TCDB" id="9.B.371.2.1">
    <property type="family name" value="the paai thioesterase (pte) family"/>
</dbReference>
<dbReference type="iPTMnet" id="Q8WYK0"/>
<dbReference type="PhosphoSitePlus" id="Q8WYK0"/>
<dbReference type="BioMuta" id="ACOT12"/>
<dbReference type="DMDM" id="25008183"/>
<dbReference type="MassIVE" id="Q8WYK0"/>
<dbReference type="PaxDb" id="9606-ENSP00000303246"/>
<dbReference type="PeptideAtlas" id="Q8WYK0"/>
<dbReference type="ProteomicsDB" id="62810"/>
<dbReference type="ProteomicsDB" id="75162">
    <molecule id="Q8WYK0-1"/>
</dbReference>
<dbReference type="Antibodypedia" id="24697">
    <property type="antibodies" value="182 antibodies from 24 providers"/>
</dbReference>
<dbReference type="DNASU" id="134526"/>
<dbReference type="Ensembl" id="ENST00000307624.8">
    <molecule id="Q8WYK0-1"/>
    <property type="protein sequence ID" value="ENSP00000303246.3"/>
    <property type="gene ID" value="ENSG00000172497.9"/>
</dbReference>
<dbReference type="Ensembl" id="ENST00000513751.1">
    <molecule id="Q8WYK0-2"/>
    <property type="protein sequence ID" value="ENSP00000421628.1"/>
    <property type="gene ID" value="ENSG00000172497.9"/>
</dbReference>
<dbReference type="GeneID" id="134526"/>
<dbReference type="KEGG" id="hsa:134526"/>
<dbReference type="MANE-Select" id="ENST00000307624.8">
    <property type="protein sequence ID" value="ENSP00000303246.3"/>
    <property type="RefSeq nucleotide sequence ID" value="NM_130767.3"/>
    <property type="RefSeq protein sequence ID" value="NP_570123.1"/>
</dbReference>
<dbReference type="UCSC" id="uc003khl.5">
    <molecule id="Q8WYK0-1"/>
    <property type="organism name" value="human"/>
</dbReference>
<dbReference type="AGR" id="HGNC:24436"/>
<dbReference type="CTD" id="134526"/>
<dbReference type="DisGeNET" id="134526"/>
<dbReference type="GeneCards" id="ACOT12"/>
<dbReference type="HGNC" id="HGNC:24436">
    <property type="gene designation" value="ACOT12"/>
</dbReference>
<dbReference type="HPA" id="ENSG00000172497">
    <property type="expression patterns" value="Tissue enriched (liver)"/>
</dbReference>
<dbReference type="MIM" id="614315">
    <property type="type" value="gene"/>
</dbReference>
<dbReference type="neXtProt" id="NX_Q8WYK0"/>
<dbReference type="OpenTargets" id="ENSG00000172497"/>
<dbReference type="PharmGKB" id="PA142672657"/>
<dbReference type="VEuPathDB" id="HostDB:ENSG00000172497"/>
<dbReference type="eggNOG" id="KOG2763">
    <property type="taxonomic scope" value="Eukaryota"/>
</dbReference>
<dbReference type="GeneTree" id="ENSGT00940000160328"/>
<dbReference type="HOGENOM" id="CLU_035725_0_0_1"/>
<dbReference type="InParanoid" id="Q8WYK0"/>
<dbReference type="OMA" id="DPHYMSC"/>
<dbReference type="OrthoDB" id="3184331at2759"/>
<dbReference type="PAN-GO" id="Q8WYK0">
    <property type="GO annotations" value="6 GO annotations based on evolutionary models"/>
</dbReference>
<dbReference type="PhylomeDB" id="Q8WYK0"/>
<dbReference type="TreeFam" id="TF328368"/>
<dbReference type="BRENDA" id="3.1.2.1">
    <property type="organism ID" value="2681"/>
</dbReference>
<dbReference type="PathwayCommons" id="Q8WYK0"/>
<dbReference type="Reactome" id="R-HSA-77289">
    <property type="pathway name" value="Mitochondrial Fatty Acid Beta-Oxidation"/>
</dbReference>
<dbReference type="SignaLink" id="Q8WYK0"/>
<dbReference type="UniPathway" id="UPA00199"/>
<dbReference type="BioGRID-ORCS" id="134526">
    <property type="hits" value="98 hits in 1142 CRISPR screens"/>
</dbReference>
<dbReference type="ChiTaRS" id="ACOT12">
    <property type="organism name" value="human"/>
</dbReference>
<dbReference type="EvolutionaryTrace" id="Q8WYK0"/>
<dbReference type="GeneWiki" id="ACOT12"/>
<dbReference type="GenomeRNAi" id="134526"/>
<dbReference type="Pharos" id="Q8WYK0">
    <property type="development level" value="Tbio"/>
</dbReference>
<dbReference type="PRO" id="PR:Q8WYK0"/>
<dbReference type="Proteomes" id="UP000005640">
    <property type="component" value="Chromosome 5"/>
</dbReference>
<dbReference type="RNAct" id="Q8WYK0">
    <property type="molecule type" value="protein"/>
</dbReference>
<dbReference type="Bgee" id="ENSG00000172497">
    <property type="expression patterns" value="Expressed in right lobe of liver and 67 other cell types or tissues"/>
</dbReference>
<dbReference type="GO" id="GO:0005737">
    <property type="term" value="C:cytoplasm"/>
    <property type="evidence" value="ECO:0000318"/>
    <property type="project" value="GO_Central"/>
</dbReference>
<dbReference type="GO" id="GO:0005829">
    <property type="term" value="C:cytosol"/>
    <property type="evidence" value="ECO:0000314"/>
    <property type="project" value="HPA"/>
</dbReference>
<dbReference type="GO" id="GO:0045171">
    <property type="term" value="C:intercellular bridge"/>
    <property type="evidence" value="ECO:0000314"/>
    <property type="project" value="HPA"/>
</dbReference>
<dbReference type="GO" id="GO:0005654">
    <property type="term" value="C:nucleoplasm"/>
    <property type="evidence" value="ECO:0000314"/>
    <property type="project" value="HPA"/>
</dbReference>
<dbReference type="GO" id="GO:0003986">
    <property type="term" value="F:acetyl-CoA hydrolase activity"/>
    <property type="evidence" value="ECO:0000250"/>
    <property type="project" value="HGNC-UCL"/>
</dbReference>
<dbReference type="GO" id="GO:0005524">
    <property type="term" value="F:ATP binding"/>
    <property type="evidence" value="ECO:0007669"/>
    <property type="project" value="Ensembl"/>
</dbReference>
<dbReference type="GO" id="GO:0052689">
    <property type="term" value="F:carboxylic ester hydrolase activity"/>
    <property type="evidence" value="ECO:0007669"/>
    <property type="project" value="UniProtKB-KW"/>
</dbReference>
<dbReference type="GO" id="GO:0042802">
    <property type="term" value="F:identical protein binding"/>
    <property type="evidence" value="ECO:0000353"/>
    <property type="project" value="IntAct"/>
</dbReference>
<dbReference type="GO" id="GO:0008289">
    <property type="term" value="F:lipid binding"/>
    <property type="evidence" value="ECO:0007669"/>
    <property type="project" value="InterPro"/>
</dbReference>
<dbReference type="GO" id="GO:0006084">
    <property type="term" value="P:acetyl-CoA metabolic process"/>
    <property type="evidence" value="ECO:0000318"/>
    <property type="project" value="GO_Central"/>
</dbReference>
<dbReference type="GO" id="GO:0006637">
    <property type="term" value="P:acyl-CoA metabolic process"/>
    <property type="evidence" value="ECO:0000250"/>
    <property type="project" value="HGNC-UCL"/>
</dbReference>
<dbReference type="GO" id="GO:0006631">
    <property type="term" value="P:fatty acid metabolic process"/>
    <property type="evidence" value="ECO:0007669"/>
    <property type="project" value="UniProtKB-UniPathway"/>
</dbReference>
<dbReference type="CDD" id="cd03442">
    <property type="entry name" value="BFIT_BACH"/>
    <property type="match status" value="2"/>
</dbReference>
<dbReference type="CDD" id="cd08914">
    <property type="entry name" value="START_STARD15-like"/>
    <property type="match status" value="1"/>
</dbReference>
<dbReference type="FunFam" id="3.10.129.10:FF:000029">
    <property type="entry name" value="Acyl-CoA thioesterase 12"/>
    <property type="match status" value="1"/>
</dbReference>
<dbReference type="FunFam" id="3.30.530.20:FF:000023">
    <property type="entry name" value="Acyl-CoA thioesterase 12"/>
    <property type="match status" value="1"/>
</dbReference>
<dbReference type="FunFam" id="3.10.129.10:FF:000011">
    <property type="entry name" value="Acyl-coenzyme A thioesterase 11"/>
    <property type="match status" value="1"/>
</dbReference>
<dbReference type="Gene3D" id="3.30.530.20">
    <property type="match status" value="1"/>
</dbReference>
<dbReference type="Gene3D" id="3.10.129.10">
    <property type="entry name" value="Hotdog Thioesterase"/>
    <property type="match status" value="2"/>
</dbReference>
<dbReference type="InterPro" id="IPR040170">
    <property type="entry name" value="Cytosol_ACT"/>
</dbReference>
<dbReference type="InterPro" id="IPR033120">
    <property type="entry name" value="HOTDOG_ACOT"/>
</dbReference>
<dbReference type="InterPro" id="IPR029069">
    <property type="entry name" value="HotDog_dom_sf"/>
</dbReference>
<dbReference type="InterPro" id="IPR023393">
    <property type="entry name" value="START-like_dom_sf"/>
</dbReference>
<dbReference type="InterPro" id="IPR002913">
    <property type="entry name" value="START_lipid-bd_dom"/>
</dbReference>
<dbReference type="InterPro" id="IPR006683">
    <property type="entry name" value="Thioestr_dom"/>
</dbReference>
<dbReference type="PANTHER" id="PTHR11049:SF3">
    <property type="entry name" value="ACETYL-COENZYME A THIOESTERASE"/>
    <property type="match status" value="1"/>
</dbReference>
<dbReference type="PANTHER" id="PTHR11049">
    <property type="entry name" value="ACYL COENZYME A THIOESTER HYDROLASE"/>
    <property type="match status" value="1"/>
</dbReference>
<dbReference type="Pfam" id="PF03061">
    <property type="entry name" value="4HBT"/>
    <property type="match status" value="2"/>
</dbReference>
<dbReference type="Pfam" id="PF01852">
    <property type="entry name" value="START"/>
    <property type="match status" value="1"/>
</dbReference>
<dbReference type="SUPFAM" id="SSF55961">
    <property type="entry name" value="Bet v1-like"/>
    <property type="match status" value="1"/>
</dbReference>
<dbReference type="SUPFAM" id="SSF54637">
    <property type="entry name" value="Thioesterase/thiol ester dehydrase-isomerase"/>
    <property type="match status" value="2"/>
</dbReference>
<dbReference type="PROSITE" id="PS51770">
    <property type="entry name" value="HOTDOG_ACOT"/>
    <property type="match status" value="2"/>
</dbReference>
<dbReference type="PROSITE" id="PS50848">
    <property type="entry name" value="START"/>
    <property type="match status" value="1"/>
</dbReference>
<feature type="chain" id="PRO_0000053809" description="Acetyl-coenzyme A thioesterase">
    <location>
        <begin position="1"/>
        <end position="555"/>
    </location>
</feature>
<feature type="domain" description="HotDog ACOT-type 1" evidence="4">
    <location>
        <begin position="5"/>
        <end position="117"/>
    </location>
</feature>
<feature type="domain" description="HotDog ACOT-type 2" evidence="4">
    <location>
        <begin position="179"/>
        <end position="294"/>
    </location>
</feature>
<feature type="domain" description="START" evidence="3">
    <location>
        <begin position="340"/>
        <end position="549"/>
    </location>
</feature>
<feature type="binding site">
    <location>
        <begin position="53"/>
        <end position="55"/>
    </location>
    <ligand>
        <name>CoA</name>
        <dbReference type="ChEBI" id="CHEBI:57287"/>
    </ligand>
</feature>
<feature type="binding site">
    <location>
        <begin position="82"/>
        <end position="84"/>
    </location>
    <ligand>
        <name>CoA</name>
        <dbReference type="ChEBI" id="CHEBI:57287"/>
    </ligand>
</feature>
<feature type="binding site" evidence="7">
    <location>
        <position position="144"/>
    </location>
    <ligand>
        <name>CoA</name>
        <dbReference type="ChEBI" id="CHEBI:57287"/>
    </ligand>
</feature>
<feature type="binding site">
    <location>
        <begin position="234"/>
        <end position="236"/>
    </location>
    <ligand>
        <name>CoA</name>
        <dbReference type="ChEBI" id="CHEBI:57287"/>
    </ligand>
</feature>
<feature type="modified residue" description="N6-succinyllysine" evidence="2">
    <location>
        <position position="33"/>
    </location>
</feature>
<feature type="modified residue" description="N6-succinyllysine" evidence="2">
    <location>
        <position position="159"/>
    </location>
</feature>
<feature type="modified residue" description="N6-succinyllysine" evidence="2">
    <location>
        <position position="228"/>
    </location>
</feature>
<feature type="splice variant" id="VSP_055785" description="In isoform 2." evidence="8">
    <original>DL</original>
    <variation>GQ</variation>
    <location>
        <begin position="166"/>
        <end position="167"/>
    </location>
</feature>
<feature type="splice variant" id="VSP_055786" description="In isoform 2." evidence="8">
    <location>
        <begin position="168"/>
        <end position="555"/>
    </location>
</feature>
<feature type="sequence variant" id="VAR_064691" description="Found in a clear cell renal carcinoma case; somatic mutation." evidence="6">
    <original>L</original>
    <variation>H</variation>
    <location>
        <position position="190"/>
    </location>
</feature>
<feature type="sequence variant" id="VAR_048192" description="In dbSNP:rs34607174.">
    <original>V</original>
    <variation>I</variation>
    <location>
        <position position="230"/>
    </location>
</feature>
<feature type="sequence variant" id="VAR_048193" description="In dbSNP:rs10371.">
    <original>A</original>
    <variation>T</variation>
    <location>
        <position position="403"/>
    </location>
</feature>
<feature type="strand" evidence="11">
    <location>
        <begin position="9"/>
        <end position="14"/>
    </location>
</feature>
<feature type="helix" evidence="11">
    <location>
        <begin position="17"/>
        <end position="19"/>
    </location>
</feature>
<feature type="strand" evidence="11">
    <location>
        <begin position="24"/>
        <end position="26"/>
    </location>
</feature>
<feature type="helix" evidence="11">
    <location>
        <begin position="28"/>
        <end position="47"/>
    </location>
</feature>
<feature type="strand" evidence="11">
    <location>
        <begin position="51"/>
        <end position="56"/>
    </location>
</feature>
<feature type="strand" evidence="11">
    <location>
        <begin position="69"/>
        <end position="80"/>
    </location>
</feature>
<feature type="strand" evidence="11">
    <location>
        <begin position="82"/>
        <end position="95"/>
    </location>
</feature>
<feature type="turn" evidence="11">
    <location>
        <begin position="96"/>
        <end position="98"/>
    </location>
</feature>
<feature type="strand" evidence="11">
    <location>
        <begin position="101"/>
        <end position="113"/>
    </location>
</feature>
<feature type="strand" evidence="11">
    <location>
        <begin position="116"/>
        <end position="118"/>
    </location>
</feature>
<feature type="helix" evidence="11">
    <location>
        <begin position="131"/>
        <end position="160"/>
    </location>
</feature>
<feature type="helix" evidence="11">
    <location>
        <begin position="171"/>
        <end position="173"/>
    </location>
</feature>
<feature type="helix" evidence="11">
    <location>
        <begin position="179"/>
        <end position="181"/>
    </location>
</feature>
<feature type="strand" evidence="11">
    <location>
        <begin position="183"/>
        <end position="188"/>
    </location>
</feature>
<feature type="helix" evidence="11">
    <location>
        <begin position="191"/>
        <end position="193"/>
    </location>
</feature>
<feature type="strand" evidence="11">
    <location>
        <begin position="198"/>
        <end position="200"/>
    </location>
</feature>
<feature type="helix" evidence="11">
    <location>
        <begin position="202"/>
        <end position="221"/>
    </location>
</feature>
<feature type="strand" evidence="11">
    <location>
        <begin position="222"/>
        <end position="230"/>
    </location>
</feature>
<feature type="strand" evidence="11">
    <location>
        <begin position="244"/>
        <end position="255"/>
    </location>
</feature>
<feature type="strand" evidence="11">
    <location>
        <begin position="258"/>
        <end position="268"/>
    </location>
</feature>
<feature type="helix" evidence="11">
    <location>
        <begin position="270"/>
        <end position="274"/>
    </location>
</feature>
<feature type="strand" evidence="11">
    <location>
        <begin position="279"/>
        <end position="291"/>
    </location>
</feature>
<feature type="strand" evidence="12">
    <location>
        <begin position="293"/>
        <end position="295"/>
    </location>
</feature>
<feature type="helix" evidence="11">
    <location>
        <begin position="308"/>
        <end position="325"/>
    </location>
</feature>
<accession>Q8WYK0</accession>
<accession>B3KVK9</accession>
<accession>Q5FWE9</accession>
<reference key="1">
    <citation type="journal article" date="2006" name="Acta Biochim. Pol.">
        <title>Molecular cloning and functional expression of human cytosolic acetyl-CoA hydrolase.</title>
        <authorList>
            <person name="Suematsu N."/>
            <person name="Isohashi F."/>
        </authorList>
    </citation>
    <scope>NUCLEOTIDE SEQUENCE [MRNA] (ISOFORM 1)</scope>
    <scope>FUNCTION</scope>
    <scope>CATALYTIC ACTIVITY</scope>
    <scope>ACTIVITY REGULATION</scope>
    <scope>BIOPHYSICOCHEMICAL PROPERTIES</scope>
    <scope>PATHWAY</scope>
    <scope>SUBCELLULAR LOCATION</scope>
    <source>
        <tissue>Liver</tissue>
    </source>
</reference>
<reference key="2">
    <citation type="journal article" date="2004" name="Nat. Genet.">
        <title>Complete sequencing and characterization of 21,243 full-length human cDNAs.</title>
        <authorList>
            <person name="Ota T."/>
            <person name="Suzuki Y."/>
            <person name="Nishikawa T."/>
            <person name="Otsuki T."/>
            <person name="Sugiyama T."/>
            <person name="Irie R."/>
            <person name="Wakamatsu A."/>
            <person name="Hayashi K."/>
            <person name="Sato H."/>
            <person name="Nagai K."/>
            <person name="Kimura K."/>
            <person name="Makita H."/>
            <person name="Sekine M."/>
            <person name="Obayashi M."/>
            <person name="Nishi T."/>
            <person name="Shibahara T."/>
            <person name="Tanaka T."/>
            <person name="Ishii S."/>
            <person name="Yamamoto J."/>
            <person name="Saito K."/>
            <person name="Kawai Y."/>
            <person name="Isono Y."/>
            <person name="Nakamura Y."/>
            <person name="Nagahari K."/>
            <person name="Murakami K."/>
            <person name="Yasuda T."/>
            <person name="Iwayanagi T."/>
            <person name="Wagatsuma M."/>
            <person name="Shiratori A."/>
            <person name="Sudo H."/>
            <person name="Hosoiri T."/>
            <person name="Kaku Y."/>
            <person name="Kodaira H."/>
            <person name="Kondo H."/>
            <person name="Sugawara M."/>
            <person name="Takahashi M."/>
            <person name="Kanda K."/>
            <person name="Yokoi T."/>
            <person name="Furuya T."/>
            <person name="Kikkawa E."/>
            <person name="Omura Y."/>
            <person name="Abe K."/>
            <person name="Kamihara K."/>
            <person name="Katsuta N."/>
            <person name="Sato K."/>
            <person name="Tanikawa M."/>
            <person name="Yamazaki M."/>
            <person name="Ninomiya K."/>
            <person name="Ishibashi T."/>
            <person name="Yamashita H."/>
            <person name="Murakawa K."/>
            <person name="Fujimori K."/>
            <person name="Tanai H."/>
            <person name="Kimata M."/>
            <person name="Watanabe M."/>
            <person name="Hiraoka S."/>
            <person name="Chiba Y."/>
            <person name="Ishida S."/>
            <person name="Ono Y."/>
            <person name="Takiguchi S."/>
            <person name="Watanabe S."/>
            <person name="Yosida M."/>
            <person name="Hotuta T."/>
            <person name="Kusano J."/>
            <person name="Kanehori K."/>
            <person name="Takahashi-Fujii A."/>
            <person name="Hara H."/>
            <person name="Tanase T.-O."/>
            <person name="Nomura Y."/>
            <person name="Togiya S."/>
            <person name="Komai F."/>
            <person name="Hara R."/>
            <person name="Takeuchi K."/>
            <person name="Arita M."/>
            <person name="Imose N."/>
            <person name="Musashino K."/>
            <person name="Yuuki H."/>
            <person name="Oshima A."/>
            <person name="Sasaki N."/>
            <person name="Aotsuka S."/>
            <person name="Yoshikawa Y."/>
            <person name="Matsunawa H."/>
            <person name="Ichihara T."/>
            <person name="Shiohata N."/>
            <person name="Sano S."/>
            <person name="Moriya S."/>
            <person name="Momiyama H."/>
            <person name="Satoh N."/>
            <person name="Takami S."/>
            <person name="Terashima Y."/>
            <person name="Suzuki O."/>
            <person name="Nakagawa S."/>
            <person name="Senoh A."/>
            <person name="Mizoguchi H."/>
            <person name="Goto Y."/>
            <person name="Shimizu F."/>
            <person name="Wakebe H."/>
            <person name="Hishigaki H."/>
            <person name="Watanabe T."/>
            <person name="Sugiyama A."/>
            <person name="Takemoto M."/>
            <person name="Kawakami B."/>
            <person name="Yamazaki M."/>
            <person name="Watanabe K."/>
            <person name="Kumagai A."/>
            <person name="Itakura S."/>
            <person name="Fukuzumi Y."/>
            <person name="Fujimori Y."/>
            <person name="Komiyama M."/>
            <person name="Tashiro H."/>
            <person name="Tanigami A."/>
            <person name="Fujiwara T."/>
            <person name="Ono T."/>
            <person name="Yamada K."/>
            <person name="Fujii Y."/>
            <person name="Ozaki K."/>
            <person name="Hirao M."/>
            <person name="Ohmori Y."/>
            <person name="Kawabata A."/>
            <person name="Hikiji T."/>
            <person name="Kobatake N."/>
            <person name="Inagaki H."/>
            <person name="Ikema Y."/>
            <person name="Okamoto S."/>
            <person name="Okitani R."/>
            <person name="Kawakami T."/>
            <person name="Noguchi S."/>
            <person name="Itoh T."/>
            <person name="Shigeta K."/>
            <person name="Senba T."/>
            <person name="Matsumura K."/>
            <person name="Nakajima Y."/>
            <person name="Mizuno T."/>
            <person name="Morinaga M."/>
            <person name="Sasaki M."/>
            <person name="Togashi T."/>
            <person name="Oyama M."/>
            <person name="Hata H."/>
            <person name="Watanabe M."/>
            <person name="Komatsu T."/>
            <person name="Mizushima-Sugano J."/>
            <person name="Satoh T."/>
            <person name="Shirai Y."/>
            <person name="Takahashi Y."/>
            <person name="Nakagawa K."/>
            <person name="Okumura K."/>
            <person name="Nagase T."/>
            <person name="Nomura N."/>
            <person name="Kikuchi H."/>
            <person name="Masuho Y."/>
            <person name="Yamashita R."/>
            <person name="Nakai K."/>
            <person name="Yada T."/>
            <person name="Nakamura Y."/>
            <person name="Ohara O."/>
            <person name="Isogai T."/>
            <person name="Sugano S."/>
        </authorList>
    </citation>
    <scope>NUCLEOTIDE SEQUENCE [LARGE SCALE MRNA] (ISOFORM 1)</scope>
    <source>
        <tissue>Liver</tissue>
    </source>
</reference>
<reference key="3">
    <citation type="journal article" date="2004" name="Nature">
        <title>The DNA sequence and comparative analysis of human chromosome 5.</title>
        <authorList>
            <person name="Schmutz J."/>
            <person name="Martin J."/>
            <person name="Terry A."/>
            <person name="Couronne O."/>
            <person name="Grimwood J."/>
            <person name="Lowry S."/>
            <person name="Gordon L.A."/>
            <person name="Scott D."/>
            <person name="Xie G."/>
            <person name="Huang W."/>
            <person name="Hellsten U."/>
            <person name="Tran-Gyamfi M."/>
            <person name="She X."/>
            <person name="Prabhakar S."/>
            <person name="Aerts A."/>
            <person name="Altherr M."/>
            <person name="Bajorek E."/>
            <person name="Black S."/>
            <person name="Branscomb E."/>
            <person name="Caoile C."/>
            <person name="Challacombe J.F."/>
            <person name="Chan Y.M."/>
            <person name="Denys M."/>
            <person name="Detter J.C."/>
            <person name="Escobar J."/>
            <person name="Flowers D."/>
            <person name="Fotopulos D."/>
            <person name="Glavina T."/>
            <person name="Gomez M."/>
            <person name="Gonzales E."/>
            <person name="Goodstein D."/>
            <person name="Grigoriev I."/>
            <person name="Groza M."/>
            <person name="Hammon N."/>
            <person name="Hawkins T."/>
            <person name="Haydu L."/>
            <person name="Israni S."/>
            <person name="Jett J."/>
            <person name="Kadner K."/>
            <person name="Kimball H."/>
            <person name="Kobayashi A."/>
            <person name="Lopez F."/>
            <person name="Lou Y."/>
            <person name="Martinez D."/>
            <person name="Medina C."/>
            <person name="Morgan J."/>
            <person name="Nandkeshwar R."/>
            <person name="Noonan J.P."/>
            <person name="Pitluck S."/>
            <person name="Pollard M."/>
            <person name="Predki P."/>
            <person name="Priest J."/>
            <person name="Ramirez L."/>
            <person name="Retterer J."/>
            <person name="Rodriguez A."/>
            <person name="Rogers S."/>
            <person name="Salamov A."/>
            <person name="Salazar A."/>
            <person name="Thayer N."/>
            <person name="Tice H."/>
            <person name="Tsai M."/>
            <person name="Ustaszewska A."/>
            <person name="Vo N."/>
            <person name="Wheeler J."/>
            <person name="Wu K."/>
            <person name="Yang J."/>
            <person name="Dickson M."/>
            <person name="Cheng J.-F."/>
            <person name="Eichler E.E."/>
            <person name="Olsen A."/>
            <person name="Pennacchio L.A."/>
            <person name="Rokhsar D.S."/>
            <person name="Richardson P."/>
            <person name="Lucas S.M."/>
            <person name="Myers R.M."/>
            <person name="Rubin E.M."/>
        </authorList>
    </citation>
    <scope>NUCLEOTIDE SEQUENCE [LARGE SCALE GENOMIC DNA]</scope>
</reference>
<reference key="4">
    <citation type="submission" date="2005-07" db="EMBL/GenBank/DDBJ databases">
        <authorList>
            <person name="Mural R.J."/>
            <person name="Istrail S."/>
            <person name="Sutton G.G."/>
            <person name="Florea L."/>
            <person name="Halpern A.L."/>
            <person name="Mobarry C.M."/>
            <person name="Lippert R."/>
            <person name="Walenz B."/>
            <person name="Shatkay H."/>
            <person name="Dew I."/>
            <person name="Miller J.R."/>
            <person name="Flanigan M.J."/>
            <person name="Edwards N.J."/>
            <person name="Bolanos R."/>
            <person name="Fasulo D."/>
            <person name="Halldorsson B.V."/>
            <person name="Hannenhalli S."/>
            <person name="Turner R."/>
            <person name="Yooseph S."/>
            <person name="Lu F."/>
            <person name="Nusskern D.R."/>
            <person name="Shue B.C."/>
            <person name="Zheng X.H."/>
            <person name="Zhong F."/>
            <person name="Delcher A.L."/>
            <person name="Huson D.H."/>
            <person name="Kravitz S.A."/>
            <person name="Mouchard L."/>
            <person name="Reinert K."/>
            <person name="Remington K.A."/>
            <person name="Clark A.G."/>
            <person name="Waterman M.S."/>
            <person name="Eichler E.E."/>
            <person name="Adams M.D."/>
            <person name="Hunkapiller M.W."/>
            <person name="Myers E.W."/>
            <person name="Venter J.C."/>
        </authorList>
    </citation>
    <scope>NUCLEOTIDE SEQUENCE [LARGE SCALE GENOMIC DNA]</scope>
</reference>
<reference key="5">
    <citation type="journal article" date="2004" name="Genome Res.">
        <title>The status, quality, and expansion of the NIH full-length cDNA project: the Mammalian Gene Collection (MGC).</title>
        <authorList>
            <consortium name="The MGC Project Team"/>
        </authorList>
    </citation>
    <scope>NUCLEOTIDE SEQUENCE [LARGE SCALE MRNA] (ISOFORMS 1 AND 2)</scope>
    <source>
        <tissue>Chondrosarcoma</tissue>
    </source>
</reference>
<reference key="6">
    <citation type="journal article" date="2014" name="J. Proteomics">
        <title>An enzyme assisted RP-RPLC approach for in-depth analysis of human liver phosphoproteome.</title>
        <authorList>
            <person name="Bian Y."/>
            <person name="Song C."/>
            <person name="Cheng K."/>
            <person name="Dong M."/>
            <person name="Wang F."/>
            <person name="Huang J."/>
            <person name="Sun D."/>
            <person name="Wang L."/>
            <person name="Ye M."/>
            <person name="Zou H."/>
        </authorList>
    </citation>
    <scope>IDENTIFICATION BY MASS SPECTROMETRY [LARGE SCALE ANALYSIS]</scope>
    <source>
        <tissue>Liver</tissue>
    </source>
</reference>
<reference key="7">
    <citation type="submission" date="2007-11" db="PDB data bank">
        <title>Human acyl-coenzyme A thioesterase 12.</title>
        <authorList>
            <consortium name="Structural genomics consortium (SGC)"/>
        </authorList>
    </citation>
    <scope>X-RAY CRYSTALLOGRAPHY (2.7 ANGSTROMS) OF 7-316 IN COMPLEX WITH COENZYME A</scope>
</reference>
<reference key="8">
    <citation type="journal article" date="2011" name="Nature">
        <title>Exome sequencing identifies frequent mutation of the SWI/SNF complex gene PBRM1 in renal carcinoma.</title>
        <authorList>
            <person name="Varela I."/>
            <person name="Tarpey P."/>
            <person name="Raine K."/>
            <person name="Huang D."/>
            <person name="Ong C.K."/>
            <person name="Stephens P."/>
            <person name="Davies H."/>
            <person name="Jones D."/>
            <person name="Lin M.L."/>
            <person name="Teague J."/>
            <person name="Bignell G."/>
            <person name="Butler A."/>
            <person name="Cho J."/>
            <person name="Dalgliesh G.L."/>
            <person name="Galappaththige D."/>
            <person name="Greenman C."/>
            <person name="Hardy C."/>
            <person name="Jia M."/>
            <person name="Latimer C."/>
            <person name="Lau K.W."/>
            <person name="Marshall J."/>
            <person name="McLaren S."/>
            <person name="Menzies A."/>
            <person name="Mudie L."/>
            <person name="Stebbings L."/>
            <person name="Largaespada D.A."/>
            <person name="Wessels L.F.A."/>
            <person name="Richard S."/>
            <person name="Kahnoski R.J."/>
            <person name="Anema J."/>
            <person name="Tuveson D.A."/>
            <person name="Perez-Mancera P.A."/>
            <person name="Mustonen V."/>
            <person name="Fischer A."/>
            <person name="Adams D.J."/>
            <person name="Rust A."/>
            <person name="Chan-On W."/>
            <person name="Subimerb C."/>
            <person name="Dykema K."/>
            <person name="Furge K."/>
            <person name="Campbell P.J."/>
            <person name="Teh B.T."/>
            <person name="Stratton M.R."/>
            <person name="Futreal P.A."/>
        </authorList>
    </citation>
    <scope>VARIANT HIS-190</scope>
</reference>
<evidence type="ECO:0000250" key="1">
    <source>
        <dbReference type="UniProtKB" id="Q99NB7"/>
    </source>
</evidence>
<evidence type="ECO:0000250" key="2">
    <source>
        <dbReference type="UniProtKB" id="Q9DBK0"/>
    </source>
</evidence>
<evidence type="ECO:0000255" key="3">
    <source>
        <dbReference type="PROSITE-ProRule" id="PRU00197"/>
    </source>
</evidence>
<evidence type="ECO:0000255" key="4">
    <source>
        <dbReference type="PROSITE-ProRule" id="PRU01106"/>
    </source>
</evidence>
<evidence type="ECO:0000269" key="5">
    <source>
    </source>
</evidence>
<evidence type="ECO:0000269" key="6">
    <source>
    </source>
</evidence>
<evidence type="ECO:0000269" key="7">
    <source ref="7"/>
</evidence>
<evidence type="ECO:0000303" key="8">
    <source>
    </source>
</evidence>
<evidence type="ECO:0000305" key="9"/>
<evidence type="ECO:0000305" key="10">
    <source>
    </source>
</evidence>
<evidence type="ECO:0007829" key="11">
    <source>
        <dbReference type="PDB" id="4MOB"/>
    </source>
</evidence>
<evidence type="ECO:0007829" key="12">
    <source>
        <dbReference type="PDB" id="4MOC"/>
    </source>
</evidence>
<keyword id="KW-0002">3D-structure</keyword>
<keyword id="KW-0025">Alternative splicing</keyword>
<keyword id="KW-0963">Cytoplasm</keyword>
<keyword id="KW-0276">Fatty acid metabolism</keyword>
<keyword id="KW-0378">Hydrolase</keyword>
<keyword id="KW-0443">Lipid metabolism</keyword>
<keyword id="KW-1267">Proteomics identification</keyword>
<keyword id="KW-1185">Reference proteome</keyword>
<keyword id="KW-0677">Repeat</keyword>
<keyword id="KW-0719">Serine esterase</keyword>
<comment type="function">
    <text evidence="5">Catalyzes the hydrolysis of acyl-CoAs into free fatty acids and coenzyme A (CoASH), regulating their respective intracellular levels (PubMed:16951743). Preferentially hydrolyzes acetyl-CoA (PubMed:16951743).</text>
</comment>
<comment type="catalytic activity">
    <reaction evidence="5">
        <text>acetyl-CoA + H2O = acetate + CoA + H(+)</text>
        <dbReference type="Rhea" id="RHEA:20289"/>
        <dbReference type="ChEBI" id="CHEBI:15377"/>
        <dbReference type="ChEBI" id="CHEBI:15378"/>
        <dbReference type="ChEBI" id="CHEBI:30089"/>
        <dbReference type="ChEBI" id="CHEBI:57287"/>
        <dbReference type="ChEBI" id="CHEBI:57288"/>
        <dbReference type="EC" id="3.1.2.1"/>
    </reaction>
    <physiologicalReaction direction="left-to-right" evidence="10">
        <dbReference type="Rhea" id="RHEA:20290"/>
    </physiologicalReaction>
</comment>
<comment type="catalytic activity">
    <reaction evidence="1">
        <text>butanoyl-CoA + H2O = butanoate + CoA + H(+)</text>
        <dbReference type="Rhea" id="RHEA:40111"/>
        <dbReference type="ChEBI" id="CHEBI:15377"/>
        <dbReference type="ChEBI" id="CHEBI:15378"/>
        <dbReference type="ChEBI" id="CHEBI:17968"/>
        <dbReference type="ChEBI" id="CHEBI:57287"/>
        <dbReference type="ChEBI" id="CHEBI:57371"/>
    </reaction>
    <physiologicalReaction direction="left-to-right" evidence="1">
        <dbReference type="Rhea" id="RHEA:40112"/>
    </physiologicalReaction>
</comment>
<comment type="catalytic activity">
    <reaction evidence="1">
        <text>hexanoyl-CoA + H2O = hexanoate + CoA + H(+)</text>
        <dbReference type="Rhea" id="RHEA:40115"/>
        <dbReference type="ChEBI" id="CHEBI:15377"/>
        <dbReference type="ChEBI" id="CHEBI:15378"/>
        <dbReference type="ChEBI" id="CHEBI:17120"/>
        <dbReference type="ChEBI" id="CHEBI:57287"/>
        <dbReference type="ChEBI" id="CHEBI:62620"/>
    </reaction>
    <physiologicalReaction direction="left-to-right" evidence="1">
        <dbReference type="Rhea" id="RHEA:40116"/>
    </physiologicalReaction>
</comment>
<comment type="activity regulation">
    <text evidence="1 5">Inhibited by ADP. Active in the presence of ATP (PubMed:16951743). Cold labile, it dissociates into inactive monomers at low temperature (By similarity).</text>
</comment>
<comment type="biophysicochemical properties">
    <kinetics>
        <KM evidence="5">150 uM for acetyl-CoA</KM>
        <text evidence="5">kcat is 7000 sec(-1) for the hydrolysis of acetyl-CoA.</text>
    </kinetics>
</comment>
<comment type="pathway">
    <text evidence="10">Lipid metabolism; fatty acid metabolism.</text>
</comment>
<comment type="subunit">
    <text evidence="1">Homodimer or homotetramer.</text>
</comment>
<comment type="interaction">
    <interactant intactId="EBI-11954993">
        <id>Q8WYK0</id>
    </interactant>
    <interactant intactId="EBI-11954993">
        <id>Q8WYK0</id>
        <label>ACOT12</label>
    </interactant>
    <organismsDiffer>false</organismsDiffer>
    <experiments>3</experiments>
</comment>
<comment type="interaction">
    <interactant intactId="EBI-11954993">
        <id>Q8WYK0</id>
    </interactant>
    <interactant intactId="EBI-12007918">
        <id>O00154-4</id>
        <label>ACOT7</label>
    </interactant>
    <organismsDiffer>false</organismsDiffer>
    <experiments>3</experiments>
</comment>
<comment type="interaction">
    <interactant intactId="EBI-11954993">
        <id>Q8WYK0</id>
    </interactant>
    <interactant intactId="EBI-2864512">
        <id>P50221</id>
        <label>MEOX1</label>
    </interactant>
    <organismsDiffer>false</organismsDiffer>
    <experiments>3</experiments>
</comment>
<comment type="interaction">
    <interactant intactId="EBI-11954993">
        <id>Q8WYK0</id>
    </interactant>
    <interactant intactId="EBI-16439278">
        <id>Q6FHY5</id>
        <label>MEOX2</label>
    </interactant>
    <organismsDiffer>false</organismsDiffer>
    <experiments>3</experiments>
</comment>
<comment type="interaction">
    <interactant intactId="EBI-11954993">
        <id>Q8WYK0</id>
    </interactant>
    <interactant intactId="EBI-747693">
        <id>P41227</id>
        <label>NAA10</label>
    </interactant>
    <organismsDiffer>false</organismsDiffer>
    <experiments>3</experiments>
</comment>
<comment type="interaction">
    <interactant intactId="EBI-11954993">
        <id>Q8WYK0</id>
    </interactant>
    <interactant intactId="EBI-2585120">
        <id>Q9BSU3</id>
        <label>NAA11</label>
    </interactant>
    <organismsDiffer>false</organismsDiffer>
    <experiments>3</experiments>
</comment>
<comment type="interaction">
    <interactant intactId="EBI-11954993">
        <id>Q8WYK0</id>
    </interactant>
    <interactant intactId="EBI-296331">
        <id>Q02548</id>
        <label>PAX5</label>
    </interactant>
    <organismsDiffer>false</organismsDiffer>
    <experiments>3</experiments>
</comment>
<comment type="interaction">
    <interactant intactId="EBI-11954993">
        <id>Q8WYK0</id>
    </interactant>
    <interactant intactId="EBI-747278">
        <id>P26367</id>
        <label>PAX6</label>
    </interactant>
    <organismsDiffer>false</organismsDiffer>
    <experiments>3</experiments>
</comment>
<comment type="interaction">
    <interactant intactId="EBI-11954993">
        <id>Q8WYK0</id>
    </interactant>
    <interactant intactId="EBI-10829018">
        <id>Q04864-2</id>
        <label>REL</label>
    </interactant>
    <organismsDiffer>false</organismsDiffer>
    <experiments>3</experiments>
</comment>
<comment type="interaction">
    <interactant intactId="EBI-11954993">
        <id>Q8WYK0</id>
    </interactant>
    <interactant intactId="EBI-742740">
        <id>Q96BR9</id>
        <label>ZBTB8A</label>
    </interactant>
    <organismsDiffer>false</organismsDiffer>
    <experiments>5</experiments>
</comment>
<comment type="subcellular location">
    <subcellularLocation>
        <location evidence="5">Cytoplasm</location>
        <location evidence="5">Cytosol</location>
    </subcellularLocation>
</comment>
<comment type="alternative products">
    <event type="alternative splicing"/>
    <isoform>
        <id>Q8WYK0-1</id>
        <name>1</name>
        <sequence type="displayed"/>
    </isoform>
    <isoform>
        <id>Q8WYK0-2</id>
        <name>2</name>
        <sequence type="described" ref="VSP_055785 VSP_055786"/>
    </isoform>
</comment>
<gene>
    <name type="primary">ACOT12</name>
    <name type="synonym">CACH</name>
    <name type="synonym">CACH1</name>
    <name type="synonym">STARD15</name>
</gene>